<reference key="1">
    <citation type="journal article" date="2008" name="J. Bacteriol.">
        <title>Genome sequence of Lactobacillus helveticus: an organism distinguished by selective gene loss and IS element expansion.</title>
        <authorList>
            <person name="Callanan M."/>
            <person name="Kaleta P."/>
            <person name="O'Callaghan J."/>
            <person name="O'Sullivan O."/>
            <person name="Jordan K."/>
            <person name="McAuliffe O."/>
            <person name="Sangrador-Vegas A."/>
            <person name="Slattery L."/>
            <person name="Fitzgerald G.F."/>
            <person name="Beresford T."/>
            <person name="Ross R.P."/>
        </authorList>
    </citation>
    <scope>NUCLEOTIDE SEQUENCE [LARGE SCALE GENOMIC DNA]</scope>
    <source>
        <strain>DPC 4571</strain>
    </source>
</reference>
<accession>A8YW85</accession>
<gene>
    <name evidence="1" type="primary">purL</name>
    <name type="ordered locus">lhv_1529</name>
</gene>
<proteinExistence type="inferred from homology"/>
<comment type="function">
    <text evidence="1">Part of the phosphoribosylformylglycinamidine synthase complex involved in the purines biosynthetic pathway. Catalyzes the ATP-dependent conversion of formylglycinamide ribonucleotide (FGAR) and glutamine to yield formylglycinamidine ribonucleotide (FGAM) and glutamate. The FGAM synthase complex is composed of three subunits. PurQ produces an ammonia molecule by converting glutamine to glutamate. PurL transfers the ammonia molecule to FGAR to form FGAM in an ATP-dependent manner. PurS interacts with PurQ and PurL and is thought to assist in the transfer of the ammonia molecule from PurQ to PurL.</text>
</comment>
<comment type="catalytic activity">
    <reaction evidence="1">
        <text>N(2)-formyl-N(1)-(5-phospho-beta-D-ribosyl)glycinamide + L-glutamine + ATP + H2O = 2-formamido-N(1)-(5-O-phospho-beta-D-ribosyl)acetamidine + L-glutamate + ADP + phosphate + H(+)</text>
        <dbReference type="Rhea" id="RHEA:17129"/>
        <dbReference type="ChEBI" id="CHEBI:15377"/>
        <dbReference type="ChEBI" id="CHEBI:15378"/>
        <dbReference type="ChEBI" id="CHEBI:29985"/>
        <dbReference type="ChEBI" id="CHEBI:30616"/>
        <dbReference type="ChEBI" id="CHEBI:43474"/>
        <dbReference type="ChEBI" id="CHEBI:58359"/>
        <dbReference type="ChEBI" id="CHEBI:147286"/>
        <dbReference type="ChEBI" id="CHEBI:147287"/>
        <dbReference type="ChEBI" id="CHEBI:456216"/>
        <dbReference type="EC" id="6.3.5.3"/>
    </reaction>
</comment>
<comment type="pathway">
    <text evidence="1">Purine metabolism; IMP biosynthesis via de novo pathway; 5-amino-1-(5-phospho-D-ribosyl)imidazole from N(2)-formyl-N(1)-(5-phospho-D-ribosyl)glycinamide: step 1/2.</text>
</comment>
<comment type="subunit">
    <text evidence="1">Monomer. Part of the FGAM synthase complex composed of 1 PurL, 1 PurQ and 2 PurS subunits.</text>
</comment>
<comment type="subcellular location">
    <subcellularLocation>
        <location evidence="1">Cytoplasm</location>
    </subcellularLocation>
</comment>
<comment type="similarity">
    <text evidence="1">Belongs to the FGAMS family.</text>
</comment>
<dbReference type="EC" id="6.3.5.3" evidence="1"/>
<dbReference type="EMBL" id="CP000517">
    <property type="protein sequence ID" value="ABX27471.1"/>
    <property type="molecule type" value="Genomic_DNA"/>
</dbReference>
<dbReference type="RefSeq" id="WP_012212086.1">
    <property type="nucleotide sequence ID" value="NC_010080.1"/>
</dbReference>
<dbReference type="SMR" id="A8YW85"/>
<dbReference type="KEGG" id="lhe:lhv_1529"/>
<dbReference type="eggNOG" id="COG0046">
    <property type="taxonomic scope" value="Bacteria"/>
</dbReference>
<dbReference type="HOGENOM" id="CLU_003100_0_1_9"/>
<dbReference type="UniPathway" id="UPA00074">
    <property type="reaction ID" value="UER00128"/>
</dbReference>
<dbReference type="Proteomes" id="UP000000790">
    <property type="component" value="Chromosome"/>
</dbReference>
<dbReference type="GO" id="GO:0005737">
    <property type="term" value="C:cytoplasm"/>
    <property type="evidence" value="ECO:0007669"/>
    <property type="project" value="UniProtKB-SubCell"/>
</dbReference>
<dbReference type="GO" id="GO:0005524">
    <property type="term" value="F:ATP binding"/>
    <property type="evidence" value="ECO:0007669"/>
    <property type="project" value="UniProtKB-UniRule"/>
</dbReference>
<dbReference type="GO" id="GO:0000287">
    <property type="term" value="F:magnesium ion binding"/>
    <property type="evidence" value="ECO:0007669"/>
    <property type="project" value="UniProtKB-UniRule"/>
</dbReference>
<dbReference type="GO" id="GO:0004642">
    <property type="term" value="F:phosphoribosylformylglycinamidine synthase activity"/>
    <property type="evidence" value="ECO:0007669"/>
    <property type="project" value="UniProtKB-UniRule"/>
</dbReference>
<dbReference type="GO" id="GO:0006189">
    <property type="term" value="P:'de novo' IMP biosynthetic process"/>
    <property type="evidence" value="ECO:0007669"/>
    <property type="project" value="UniProtKB-UniRule"/>
</dbReference>
<dbReference type="CDD" id="cd02203">
    <property type="entry name" value="PurL_repeat1"/>
    <property type="match status" value="1"/>
</dbReference>
<dbReference type="CDD" id="cd02204">
    <property type="entry name" value="PurL_repeat2"/>
    <property type="match status" value="1"/>
</dbReference>
<dbReference type="FunFam" id="3.30.1330.10:FF:000004">
    <property type="entry name" value="Phosphoribosylformylglycinamidine synthase subunit PurL"/>
    <property type="match status" value="1"/>
</dbReference>
<dbReference type="Gene3D" id="3.90.650.10">
    <property type="entry name" value="PurM-like C-terminal domain"/>
    <property type="match status" value="2"/>
</dbReference>
<dbReference type="Gene3D" id="3.30.1330.10">
    <property type="entry name" value="PurM-like, N-terminal domain"/>
    <property type="match status" value="2"/>
</dbReference>
<dbReference type="HAMAP" id="MF_00420">
    <property type="entry name" value="PurL_2"/>
    <property type="match status" value="1"/>
</dbReference>
<dbReference type="InterPro" id="IPR010074">
    <property type="entry name" value="PRibForGlyAmidine_synth_PurL"/>
</dbReference>
<dbReference type="InterPro" id="IPR041609">
    <property type="entry name" value="PurL_linker"/>
</dbReference>
<dbReference type="InterPro" id="IPR010918">
    <property type="entry name" value="PurM-like_C_dom"/>
</dbReference>
<dbReference type="InterPro" id="IPR036676">
    <property type="entry name" value="PurM-like_C_sf"/>
</dbReference>
<dbReference type="InterPro" id="IPR016188">
    <property type="entry name" value="PurM-like_N"/>
</dbReference>
<dbReference type="InterPro" id="IPR036921">
    <property type="entry name" value="PurM-like_N_sf"/>
</dbReference>
<dbReference type="NCBIfam" id="TIGR01736">
    <property type="entry name" value="FGAM_synth_II"/>
    <property type="match status" value="1"/>
</dbReference>
<dbReference type="NCBIfam" id="NF002290">
    <property type="entry name" value="PRK01213.1"/>
    <property type="match status" value="1"/>
</dbReference>
<dbReference type="PANTHER" id="PTHR43555">
    <property type="entry name" value="PHOSPHORIBOSYLFORMYLGLYCINAMIDINE SYNTHASE SUBUNIT PURL"/>
    <property type="match status" value="1"/>
</dbReference>
<dbReference type="PANTHER" id="PTHR43555:SF1">
    <property type="entry name" value="PHOSPHORIBOSYLFORMYLGLYCINAMIDINE SYNTHASE SUBUNIT PURL"/>
    <property type="match status" value="1"/>
</dbReference>
<dbReference type="Pfam" id="PF00586">
    <property type="entry name" value="AIRS"/>
    <property type="match status" value="2"/>
</dbReference>
<dbReference type="Pfam" id="PF02769">
    <property type="entry name" value="AIRS_C"/>
    <property type="match status" value="2"/>
</dbReference>
<dbReference type="Pfam" id="PF18072">
    <property type="entry name" value="FGAR-AT_linker"/>
    <property type="match status" value="1"/>
</dbReference>
<dbReference type="PIRSF" id="PIRSF001587">
    <property type="entry name" value="FGAM_synthase_II"/>
    <property type="match status" value="1"/>
</dbReference>
<dbReference type="SUPFAM" id="SSF109736">
    <property type="entry name" value="FGAM synthase PurL, linker domain"/>
    <property type="match status" value="1"/>
</dbReference>
<dbReference type="SUPFAM" id="SSF56042">
    <property type="entry name" value="PurM C-terminal domain-like"/>
    <property type="match status" value="2"/>
</dbReference>
<dbReference type="SUPFAM" id="SSF55326">
    <property type="entry name" value="PurM N-terminal domain-like"/>
    <property type="match status" value="2"/>
</dbReference>
<keyword id="KW-0067">ATP-binding</keyword>
<keyword id="KW-0963">Cytoplasm</keyword>
<keyword id="KW-0436">Ligase</keyword>
<keyword id="KW-0460">Magnesium</keyword>
<keyword id="KW-0479">Metal-binding</keyword>
<keyword id="KW-0547">Nucleotide-binding</keyword>
<keyword id="KW-0658">Purine biosynthesis</keyword>
<evidence type="ECO:0000255" key="1">
    <source>
        <dbReference type="HAMAP-Rule" id="MF_00420"/>
    </source>
</evidence>
<feature type="chain" id="PRO_1000072298" description="Phosphoribosylformylglycinamidine synthase subunit PurL">
    <location>
        <begin position="1"/>
        <end position="743"/>
    </location>
</feature>
<feature type="active site" evidence="1">
    <location>
        <position position="53"/>
    </location>
</feature>
<feature type="active site" description="Proton acceptor" evidence="1">
    <location>
        <position position="99"/>
    </location>
</feature>
<feature type="binding site" evidence="1">
    <location>
        <position position="56"/>
    </location>
    <ligand>
        <name>ATP</name>
        <dbReference type="ChEBI" id="CHEBI:30616"/>
    </ligand>
</feature>
<feature type="binding site" evidence="1">
    <location>
        <position position="95"/>
    </location>
    <ligand>
        <name>ATP</name>
        <dbReference type="ChEBI" id="CHEBI:30616"/>
    </ligand>
</feature>
<feature type="binding site" evidence="1">
    <location>
        <position position="97"/>
    </location>
    <ligand>
        <name>Mg(2+)</name>
        <dbReference type="ChEBI" id="CHEBI:18420"/>
        <label>1</label>
    </ligand>
</feature>
<feature type="binding site" evidence="1">
    <location>
        <begin position="98"/>
        <end position="101"/>
    </location>
    <ligand>
        <name>substrate</name>
    </ligand>
</feature>
<feature type="binding site" evidence="1">
    <location>
        <position position="120"/>
    </location>
    <ligand>
        <name>substrate</name>
    </ligand>
</feature>
<feature type="binding site" evidence="1">
    <location>
        <position position="121"/>
    </location>
    <ligand>
        <name>Mg(2+)</name>
        <dbReference type="ChEBI" id="CHEBI:18420"/>
        <label>2</label>
    </ligand>
</feature>
<feature type="binding site" evidence="1">
    <location>
        <position position="245"/>
    </location>
    <ligand>
        <name>substrate</name>
    </ligand>
</feature>
<feature type="binding site" evidence="1">
    <location>
        <position position="275"/>
    </location>
    <ligand>
        <name>Mg(2+)</name>
        <dbReference type="ChEBI" id="CHEBI:18420"/>
        <label>2</label>
    </ligand>
</feature>
<feature type="binding site" evidence="1">
    <location>
        <begin position="319"/>
        <end position="321"/>
    </location>
    <ligand>
        <name>substrate</name>
    </ligand>
</feature>
<feature type="binding site" evidence="1">
    <location>
        <position position="502"/>
    </location>
    <ligand>
        <name>ATP</name>
        <dbReference type="ChEBI" id="CHEBI:30616"/>
    </ligand>
</feature>
<feature type="binding site" evidence="1">
    <location>
        <position position="539"/>
    </location>
    <ligand>
        <name>ATP</name>
        <dbReference type="ChEBI" id="CHEBI:30616"/>
    </ligand>
</feature>
<feature type="binding site" evidence="1">
    <location>
        <position position="540"/>
    </location>
    <ligand>
        <name>Mg(2+)</name>
        <dbReference type="ChEBI" id="CHEBI:18420"/>
        <label>1</label>
    </ligand>
</feature>
<feature type="binding site" evidence="1">
    <location>
        <position position="542"/>
    </location>
    <ligand>
        <name>substrate</name>
    </ligand>
</feature>
<sequence length="743" mass="81845">MKQAMTPEEIKEKKPYLDWSLTEHEYDYICDKLLKRLPNYTEIGLFSAMWSEHCSYKKSKPVLRLFPTKGKRVVQGPGEGAGVVDIDDGQAVVFKAESHNHPTTVEPYQGAATGVGGILRDVFSMGARPVAILDSLHFGELKNNPTMRYKMEETIRGVGDYGNCIGIPNLGGETTFDSCYNGNILLNAMCVGLMNIKDMEHGKAVGLGNSIMYVGAKTGRDGIHGATFASADFSKEHETQRSAVQVGDPFMEKLLMEACLELILKHRDWLVGIQDMGAAGIVSSSAEMATEGNAGMELNLDLVPQREPNMSAYEIMLSESQERMLLCVKKGHEEDVKKIFKDYNLDAVTIGRVIEGENYVLYHEGEKVCDIPVRSLTEDVLEEPSKEIKPQYIIDAEKMPAWRPSFESSGEILKRLLNQPTIANDQFITQQYDSQVRSNTIVKPGSDAGVLRIRHTKKAIAMCTDTNGRFVYLNPKIGGQRSVIESVCNIVASGAKPLAITDCLNYGDPNDPEIFWSLRESCQGIADACRIFETPVVSGNVSLYNENDGQAIYPSPMIGMVGLIKNTDYVIPMHVQEADDIVYLVGKTTADFAGSEVQKMLQGKISGLPEAPNLELIHDYLKNLHKAMTQGLVTSAHDLSEGGLAVSLAESVFDTEFGLNINLSEFDKTLLFSETPGRLIVSVKPENKSAFESLLGSAVQEIGRVTDQRKLSIKLANDELNTDVASLEKIWKESIPCLMKSKA</sequence>
<protein>
    <recommendedName>
        <fullName evidence="1">Phosphoribosylformylglycinamidine synthase subunit PurL</fullName>
        <shortName evidence="1">FGAM synthase</shortName>
        <ecNumber evidence="1">6.3.5.3</ecNumber>
    </recommendedName>
    <alternativeName>
        <fullName evidence="1">Formylglycinamide ribonucleotide amidotransferase subunit II</fullName>
        <shortName evidence="1">FGAR amidotransferase II</shortName>
        <shortName evidence="1">FGAR-AT II</shortName>
    </alternativeName>
    <alternativeName>
        <fullName evidence="1">Glutamine amidotransferase PurL</fullName>
    </alternativeName>
    <alternativeName>
        <fullName evidence="1">Phosphoribosylformylglycinamidine synthase subunit II</fullName>
    </alternativeName>
</protein>
<name>PURL_LACH4</name>
<organism>
    <name type="scientific">Lactobacillus helveticus (strain DPC 4571)</name>
    <dbReference type="NCBI Taxonomy" id="405566"/>
    <lineage>
        <taxon>Bacteria</taxon>
        <taxon>Bacillati</taxon>
        <taxon>Bacillota</taxon>
        <taxon>Bacilli</taxon>
        <taxon>Lactobacillales</taxon>
        <taxon>Lactobacillaceae</taxon>
        <taxon>Lactobacillus</taxon>
    </lineage>
</organism>